<feature type="chain" id="PRO_0000384539" description="Uncharacterized protein ORF55">
    <location>
        <begin position="1"/>
        <end position="55"/>
    </location>
</feature>
<protein>
    <recommendedName>
        <fullName>Uncharacterized protein ORF55</fullName>
    </recommendedName>
</protein>
<proteinExistence type="predicted"/>
<keyword id="KW-1185">Reference proteome</keyword>
<dbReference type="EMBL" id="AJ567472">
    <property type="protein sequence ID" value="CAD98959.1"/>
    <property type="molecule type" value="Genomic_DNA"/>
</dbReference>
<dbReference type="RefSeq" id="YP_003755.1">
    <property type="nucleotide sequence ID" value="NC_005830.1"/>
</dbReference>
<dbReference type="KEGG" id="vg:2769181"/>
<dbReference type="Proteomes" id="UP000000514">
    <property type="component" value="Genome"/>
</dbReference>
<reference key="1">
    <citation type="journal article" date="2003" name="Virology">
        <title>AFV1, a novel virus infecting hyperthermophilic archaea of the genus acidianus.</title>
        <authorList>
            <person name="Bettstetter M."/>
            <person name="Peng X."/>
            <person name="Garrett R.A."/>
            <person name="Prangishvili D."/>
        </authorList>
    </citation>
    <scope>NUCLEOTIDE SEQUENCE [GENOMIC DNA]</scope>
</reference>
<name>Y055_AFV1Y</name>
<organismHost>
    <name type="scientific">Acidianus hospitalis</name>
    <dbReference type="NCBI Taxonomy" id="563177"/>
</organismHost>
<organismHost>
    <name type="scientific">Acidianus infernus</name>
    <dbReference type="NCBI Taxonomy" id="12915"/>
</organismHost>
<sequence>MPLDTWKSCCPQAVMYQSGDVYVISGCGVEVKYKDLKLATREFCKKVALKRVRKK</sequence>
<accession>Q70LC1</accession>
<gene>
    <name type="ORF">ORF55</name>
</gene>
<organism>
    <name type="scientific">Acidianus filamentous virus 1 (isolate United States/Yellowstone)</name>
    <name type="common">AFV-1</name>
    <dbReference type="NCBI Taxonomy" id="654909"/>
    <lineage>
        <taxon>Viruses</taxon>
        <taxon>Adnaviria</taxon>
        <taxon>Zilligvirae</taxon>
        <taxon>Taleaviricota</taxon>
        <taxon>Tokiviricetes</taxon>
        <taxon>Ligamenvirales</taxon>
        <taxon>Ungulaviridae</taxon>
        <taxon>Captovirus</taxon>
        <taxon>Acidianus filamentous virus 1</taxon>
    </lineage>
</organism>